<gene>
    <name type="ordered locus">Os11g0231200</name>
    <name type="ordered locus">LOC_Os11g12460</name>
</gene>
<evidence type="ECO:0000250" key="1"/>
<evidence type="ECO:0000255" key="2"/>
<evidence type="ECO:0000305" key="3"/>
<keyword id="KW-0646">Protease inhibitor</keyword>
<keyword id="KW-1185">Reference proteome</keyword>
<keyword id="KW-0722">Serine protease inhibitor</keyword>
<comment type="function">
    <text evidence="1">Probable serine protease inhibitor.</text>
</comment>
<comment type="domain">
    <text evidence="1">The reactive center loop (RCL) extends out from the body of the protein and directs binding to the target protease. The protease cleaves the serpin at the reactive site within the RCL, establishing a covalent linkage between the carboxyl group of the serpin reactive site and the serine hydroxyl of the protease. The resulting inactive serpin-protease complex is highly stable (By similarity).</text>
</comment>
<comment type="similarity">
    <text evidence="3">Belongs to the serpin family.</text>
</comment>
<protein>
    <recommendedName>
        <fullName>Putative serpin-Z6C</fullName>
    </recommendedName>
    <alternativeName>
        <fullName>OrysaZ6c</fullName>
    </alternativeName>
</protein>
<accession>Q53MD1</accession>
<accession>A0A0P0Y0K2</accession>
<proteinExistence type="inferred from homology"/>
<reference key="1">
    <citation type="journal article" date="2005" name="BMC Biol.">
        <title>The sequence of rice chromosomes 11 and 12, rich in disease resistance genes and recent gene duplications.</title>
        <authorList>
            <consortium name="The rice chromosomes 11 and 12 sequencing consortia"/>
        </authorList>
    </citation>
    <scope>NUCLEOTIDE SEQUENCE [LARGE SCALE GENOMIC DNA]</scope>
    <source>
        <strain>cv. Nipponbare</strain>
    </source>
</reference>
<reference key="2">
    <citation type="journal article" date="2005" name="Nature">
        <title>The map-based sequence of the rice genome.</title>
        <authorList>
            <consortium name="International rice genome sequencing project (IRGSP)"/>
        </authorList>
    </citation>
    <scope>NUCLEOTIDE SEQUENCE [LARGE SCALE GENOMIC DNA]</scope>
    <source>
        <strain>cv. Nipponbare</strain>
    </source>
</reference>
<reference key="3">
    <citation type="journal article" date="2013" name="Rice">
        <title>Improvement of the Oryza sativa Nipponbare reference genome using next generation sequence and optical map data.</title>
        <authorList>
            <person name="Kawahara Y."/>
            <person name="de la Bastide M."/>
            <person name="Hamilton J.P."/>
            <person name="Kanamori H."/>
            <person name="McCombie W.R."/>
            <person name="Ouyang S."/>
            <person name="Schwartz D.C."/>
            <person name="Tanaka T."/>
            <person name="Wu J."/>
            <person name="Zhou S."/>
            <person name="Childs K.L."/>
            <person name="Davidson R.M."/>
            <person name="Lin H."/>
            <person name="Quesada-Ocampo L."/>
            <person name="Vaillancourt B."/>
            <person name="Sakai H."/>
            <person name="Lee S.S."/>
            <person name="Kim J."/>
            <person name="Numa H."/>
            <person name="Itoh T."/>
            <person name="Buell C.R."/>
            <person name="Matsumoto T."/>
        </authorList>
    </citation>
    <scope>GENOME REANNOTATION</scope>
    <source>
        <strain>cv. Nipponbare</strain>
    </source>
</reference>
<reference key="4">
    <citation type="journal article" date="2008" name="Funct. Integr. Genomics">
        <title>Serpins in plants and green algae.</title>
        <authorList>
            <person name="Roberts T.H."/>
            <person name="Hejgaard J."/>
        </authorList>
    </citation>
    <scope>GENE FAMILY</scope>
    <scope>NOMENCLATURE</scope>
</reference>
<dbReference type="EMBL" id="AC119670">
    <property type="protein sequence ID" value="AAX94855.1"/>
    <property type="molecule type" value="Genomic_DNA"/>
</dbReference>
<dbReference type="EMBL" id="AC136971">
    <property type="protein sequence ID" value="AAX96210.1"/>
    <property type="molecule type" value="Genomic_DNA"/>
</dbReference>
<dbReference type="EMBL" id="DP000010">
    <property type="protein sequence ID" value="ABA92177.1"/>
    <property type="molecule type" value="Genomic_DNA"/>
</dbReference>
<dbReference type="EMBL" id="AP014967">
    <property type="protein sequence ID" value="BAT13329.1"/>
    <property type="molecule type" value="Genomic_DNA"/>
</dbReference>
<dbReference type="SMR" id="Q53MD1"/>
<dbReference type="FunCoup" id="Q53MD1">
    <property type="interactions" value="283"/>
</dbReference>
<dbReference type="STRING" id="39947.Q53MD1"/>
<dbReference type="PaxDb" id="39947-Q53MD1"/>
<dbReference type="EnsemblPlants" id="Os11t0231200-00">
    <property type="protein sequence ID" value="Os11t0231200-00"/>
    <property type="gene ID" value="Os11g0231200"/>
</dbReference>
<dbReference type="Gramene" id="Os11t0231200-00">
    <property type="protein sequence ID" value="Os11t0231200-00"/>
    <property type="gene ID" value="Os11g0231200"/>
</dbReference>
<dbReference type="KEGG" id="osa:107275516"/>
<dbReference type="eggNOG" id="KOG2392">
    <property type="taxonomic scope" value="Eukaryota"/>
</dbReference>
<dbReference type="HOGENOM" id="CLU_023330_4_0_1"/>
<dbReference type="InParanoid" id="Q53MD1"/>
<dbReference type="OMA" id="MACTVLQ"/>
<dbReference type="OrthoDB" id="1063785at2759"/>
<dbReference type="Proteomes" id="UP000000763">
    <property type="component" value="Chromosome 11"/>
</dbReference>
<dbReference type="Proteomes" id="UP000059680">
    <property type="component" value="Chromosome 11"/>
</dbReference>
<dbReference type="GO" id="GO:0005615">
    <property type="term" value="C:extracellular space"/>
    <property type="evidence" value="ECO:0000318"/>
    <property type="project" value="GO_Central"/>
</dbReference>
<dbReference type="GO" id="GO:0004867">
    <property type="term" value="F:serine-type endopeptidase inhibitor activity"/>
    <property type="evidence" value="ECO:0007669"/>
    <property type="project" value="UniProtKB-KW"/>
</dbReference>
<dbReference type="CDD" id="cd02043">
    <property type="entry name" value="serpinP_plants"/>
    <property type="match status" value="1"/>
</dbReference>
<dbReference type="FunFam" id="2.30.39.10:FF:000022">
    <property type="entry name" value="Os11g0230400 protein"/>
    <property type="match status" value="1"/>
</dbReference>
<dbReference type="FunFam" id="3.30.497.10:FF:000027">
    <property type="entry name" value="Putative serpin-Z6A"/>
    <property type="match status" value="1"/>
</dbReference>
<dbReference type="FunFam" id="2.10.310.10:FF:000001">
    <property type="entry name" value="Serpin family A member 1"/>
    <property type="match status" value="1"/>
</dbReference>
<dbReference type="Gene3D" id="6.20.40.10">
    <property type="match status" value="1"/>
</dbReference>
<dbReference type="Gene3D" id="2.30.39.10">
    <property type="entry name" value="Alpha-1-antitrypsin, domain 1"/>
    <property type="match status" value="1"/>
</dbReference>
<dbReference type="Gene3D" id="3.30.497.10">
    <property type="entry name" value="Antithrombin, subunit I, domain 2"/>
    <property type="match status" value="1"/>
</dbReference>
<dbReference type="Gene3D" id="2.10.310.10">
    <property type="entry name" value="Serpins superfamily"/>
    <property type="match status" value="1"/>
</dbReference>
<dbReference type="InterPro" id="IPR023796">
    <property type="entry name" value="Serpin_dom"/>
</dbReference>
<dbReference type="InterPro" id="IPR000215">
    <property type="entry name" value="Serpin_fam"/>
</dbReference>
<dbReference type="InterPro" id="IPR036186">
    <property type="entry name" value="Serpin_sf"/>
</dbReference>
<dbReference type="InterPro" id="IPR042178">
    <property type="entry name" value="Serpin_sf_1"/>
</dbReference>
<dbReference type="InterPro" id="IPR042185">
    <property type="entry name" value="Serpin_sf_2"/>
</dbReference>
<dbReference type="PANTHER" id="PTHR11461">
    <property type="entry name" value="SERINE PROTEASE INHIBITOR, SERPIN"/>
    <property type="match status" value="1"/>
</dbReference>
<dbReference type="PANTHER" id="PTHR11461:SF209">
    <property type="entry name" value="SERPIN-Z8-RELATED"/>
    <property type="match status" value="1"/>
</dbReference>
<dbReference type="Pfam" id="PF00079">
    <property type="entry name" value="Serpin"/>
    <property type="match status" value="1"/>
</dbReference>
<dbReference type="SMART" id="SM00093">
    <property type="entry name" value="SERPIN"/>
    <property type="match status" value="1"/>
</dbReference>
<dbReference type="SUPFAM" id="SSF56574">
    <property type="entry name" value="Serpins"/>
    <property type="match status" value="1"/>
</dbReference>
<sequence length="415" mass="44307">MESCARRCAVSGLTALSMRLTKQLSAAAASKAGAAGNLVFSPLSIYSVLSVVTAGARGRTLTELLGALGAESREKLAANAGEMARALPAPGGGAAQPGGGPRVAHACGVWHERTRTVRPAFRDAAAASFNAAALAVDFLNNPEEARKEINSWVAAATENLIDTILPPGSVSTDTGLVVTSAIYFNGQWWTPFCKEITEKRAFHRLDGGDVEADFMRSGEDQYIAVHDGFKVLKMPYAACVSARTTTTPRYSMYVFLPDERDGLWSLEDRMAAGGEGFLREHTPERRVEVGEFRIPRFKLSFDDSVVGALQRLGVRDVFKPFVADLADVLEAENSGDDPPLFVSDVKHKAVIEVNEEGTEAAAATAVCLTFASAAPSSRRPARVDFVADHPFAFLVLEESSGAVLFAGHVVDPTDE</sequence>
<name>SPZ6C_ORYSJ</name>
<feature type="chain" id="PRO_0000334559" description="Putative serpin-Z6C">
    <location>
        <begin position="1"/>
        <end position="415"/>
    </location>
</feature>
<feature type="region of interest" description="RCL">
    <location>
        <begin position="357"/>
        <end position="381"/>
    </location>
</feature>
<feature type="site" description="Reactive bond" evidence="2">
    <location>
        <begin position="371"/>
        <end position="372"/>
    </location>
</feature>
<organism>
    <name type="scientific">Oryza sativa subsp. japonica</name>
    <name type="common">Rice</name>
    <dbReference type="NCBI Taxonomy" id="39947"/>
    <lineage>
        <taxon>Eukaryota</taxon>
        <taxon>Viridiplantae</taxon>
        <taxon>Streptophyta</taxon>
        <taxon>Embryophyta</taxon>
        <taxon>Tracheophyta</taxon>
        <taxon>Spermatophyta</taxon>
        <taxon>Magnoliopsida</taxon>
        <taxon>Liliopsida</taxon>
        <taxon>Poales</taxon>
        <taxon>Poaceae</taxon>
        <taxon>BOP clade</taxon>
        <taxon>Oryzoideae</taxon>
        <taxon>Oryzeae</taxon>
        <taxon>Oryzinae</taxon>
        <taxon>Oryza</taxon>
        <taxon>Oryza sativa</taxon>
    </lineage>
</organism>